<dbReference type="EC" id="6.1.1.21" evidence="1"/>
<dbReference type="EMBL" id="CP000151">
    <property type="protein sequence ID" value="ABB08706.1"/>
    <property type="molecule type" value="Genomic_DNA"/>
</dbReference>
<dbReference type="RefSeq" id="WP_011352261.1">
    <property type="nucleotide sequence ID" value="NZ_WNDV01000021.1"/>
</dbReference>
<dbReference type="SMR" id="Q39FR0"/>
<dbReference type="GeneID" id="45094988"/>
<dbReference type="KEGG" id="bur:Bcep18194_A5112"/>
<dbReference type="PATRIC" id="fig|482957.22.peg.2050"/>
<dbReference type="HOGENOM" id="CLU_025113_1_1_4"/>
<dbReference type="Proteomes" id="UP000002705">
    <property type="component" value="Chromosome 1"/>
</dbReference>
<dbReference type="GO" id="GO:0005737">
    <property type="term" value="C:cytoplasm"/>
    <property type="evidence" value="ECO:0007669"/>
    <property type="project" value="UniProtKB-SubCell"/>
</dbReference>
<dbReference type="GO" id="GO:0005524">
    <property type="term" value="F:ATP binding"/>
    <property type="evidence" value="ECO:0007669"/>
    <property type="project" value="UniProtKB-UniRule"/>
</dbReference>
<dbReference type="GO" id="GO:0004821">
    <property type="term" value="F:histidine-tRNA ligase activity"/>
    <property type="evidence" value="ECO:0007669"/>
    <property type="project" value="UniProtKB-UniRule"/>
</dbReference>
<dbReference type="GO" id="GO:0006427">
    <property type="term" value="P:histidyl-tRNA aminoacylation"/>
    <property type="evidence" value="ECO:0007669"/>
    <property type="project" value="UniProtKB-UniRule"/>
</dbReference>
<dbReference type="CDD" id="cd00773">
    <property type="entry name" value="HisRS-like_core"/>
    <property type="match status" value="1"/>
</dbReference>
<dbReference type="CDD" id="cd00859">
    <property type="entry name" value="HisRS_anticodon"/>
    <property type="match status" value="1"/>
</dbReference>
<dbReference type="FunFam" id="3.30.930.10:FF:000005">
    <property type="entry name" value="Histidine--tRNA ligase"/>
    <property type="match status" value="1"/>
</dbReference>
<dbReference type="Gene3D" id="3.40.50.800">
    <property type="entry name" value="Anticodon-binding domain"/>
    <property type="match status" value="1"/>
</dbReference>
<dbReference type="Gene3D" id="3.30.930.10">
    <property type="entry name" value="Bira Bifunctional Protein, Domain 2"/>
    <property type="match status" value="1"/>
</dbReference>
<dbReference type="HAMAP" id="MF_00127">
    <property type="entry name" value="His_tRNA_synth"/>
    <property type="match status" value="1"/>
</dbReference>
<dbReference type="InterPro" id="IPR006195">
    <property type="entry name" value="aa-tRNA-synth_II"/>
</dbReference>
<dbReference type="InterPro" id="IPR045864">
    <property type="entry name" value="aa-tRNA-synth_II/BPL/LPL"/>
</dbReference>
<dbReference type="InterPro" id="IPR004154">
    <property type="entry name" value="Anticodon-bd"/>
</dbReference>
<dbReference type="InterPro" id="IPR036621">
    <property type="entry name" value="Anticodon-bd_dom_sf"/>
</dbReference>
<dbReference type="InterPro" id="IPR015807">
    <property type="entry name" value="His-tRNA-ligase"/>
</dbReference>
<dbReference type="InterPro" id="IPR041715">
    <property type="entry name" value="HisRS-like_core"/>
</dbReference>
<dbReference type="InterPro" id="IPR004516">
    <property type="entry name" value="HisRS/HisZ"/>
</dbReference>
<dbReference type="InterPro" id="IPR033656">
    <property type="entry name" value="HisRS_anticodon"/>
</dbReference>
<dbReference type="NCBIfam" id="TIGR00442">
    <property type="entry name" value="hisS"/>
    <property type="match status" value="1"/>
</dbReference>
<dbReference type="PANTHER" id="PTHR43707:SF1">
    <property type="entry name" value="HISTIDINE--TRNA LIGASE, MITOCHONDRIAL-RELATED"/>
    <property type="match status" value="1"/>
</dbReference>
<dbReference type="PANTHER" id="PTHR43707">
    <property type="entry name" value="HISTIDYL-TRNA SYNTHETASE"/>
    <property type="match status" value="1"/>
</dbReference>
<dbReference type="Pfam" id="PF03129">
    <property type="entry name" value="HGTP_anticodon"/>
    <property type="match status" value="1"/>
</dbReference>
<dbReference type="Pfam" id="PF13393">
    <property type="entry name" value="tRNA-synt_His"/>
    <property type="match status" value="1"/>
</dbReference>
<dbReference type="PIRSF" id="PIRSF001549">
    <property type="entry name" value="His-tRNA_synth"/>
    <property type="match status" value="1"/>
</dbReference>
<dbReference type="SUPFAM" id="SSF52954">
    <property type="entry name" value="Class II aaRS ABD-related"/>
    <property type="match status" value="1"/>
</dbReference>
<dbReference type="SUPFAM" id="SSF55681">
    <property type="entry name" value="Class II aaRS and biotin synthetases"/>
    <property type="match status" value="1"/>
</dbReference>
<dbReference type="PROSITE" id="PS50862">
    <property type="entry name" value="AA_TRNA_LIGASE_II"/>
    <property type="match status" value="1"/>
</dbReference>
<proteinExistence type="inferred from homology"/>
<feature type="chain" id="PRO_1000016328" description="Histidine--tRNA ligase">
    <location>
        <begin position="1"/>
        <end position="446"/>
    </location>
</feature>
<sequence>MTEQKRKIEKLTGVKGMNDILPQDAGLWEFFEATVKSLLRAYGYQNIRTPIVEHTQLFTRGIGEVTDIVEKEMYSFTDALNGENLTMRPENTAAVVRASIEHNMLYDGPKRLWYIGPMFRHERPQRGRYRQFHQVGVEALGFAGPDADAEIIMMCQRLWDDLGLTGIKLEINSLGLAEERAAHRVELIKYLEQFADVLDEDAKRRLYTNPLRVLDTKNPALQEIAQNAPKLIDFLGDESRAHFEGLQRLLLANNIPFKINPRLVRGLDYYNLTVFEWVTDKLGAQGTVAAGGRYDPLIEQLGGKPTAACGWAMGIERILELLKEDDLAPEQEGVDVYVVHQGETAREQAFIAAERLRDTGLDVIFHCSADGAPASFKSQMKRADASGAAFAVIFGEEEVANGTVGVKALRGAGGDGEKNVQQTVPVEGLTEFLINAMVASAEDGDD</sequence>
<name>SYH_BURL3</name>
<reference key="1">
    <citation type="submission" date="2005-10" db="EMBL/GenBank/DDBJ databases">
        <title>Complete sequence of chromosome 1 of Burkholderia sp. 383.</title>
        <authorList>
            <consortium name="US DOE Joint Genome Institute"/>
            <person name="Copeland A."/>
            <person name="Lucas S."/>
            <person name="Lapidus A."/>
            <person name="Barry K."/>
            <person name="Detter J.C."/>
            <person name="Glavina T."/>
            <person name="Hammon N."/>
            <person name="Israni S."/>
            <person name="Pitluck S."/>
            <person name="Chain P."/>
            <person name="Malfatti S."/>
            <person name="Shin M."/>
            <person name="Vergez L."/>
            <person name="Schmutz J."/>
            <person name="Larimer F."/>
            <person name="Land M."/>
            <person name="Kyrpides N."/>
            <person name="Lykidis A."/>
            <person name="Richardson P."/>
        </authorList>
    </citation>
    <scope>NUCLEOTIDE SEQUENCE [LARGE SCALE GENOMIC DNA]</scope>
    <source>
        <strain>ATCC 17760 / DSM 23089 / LMG 22485 / NCIMB 9086 / R18194 / 383</strain>
    </source>
</reference>
<organism>
    <name type="scientific">Burkholderia lata (strain ATCC 17760 / DSM 23089 / LMG 22485 / NCIMB 9086 / R18194 / 383)</name>
    <dbReference type="NCBI Taxonomy" id="482957"/>
    <lineage>
        <taxon>Bacteria</taxon>
        <taxon>Pseudomonadati</taxon>
        <taxon>Pseudomonadota</taxon>
        <taxon>Betaproteobacteria</taxon>
        <taxon>Burkholderiales</taxon>
        <taxon>Burkholderiaceae</taxon>
        <taxon>Burkholderia</taxon>
        <taxon>Burkholderia cepacia complex</taxon>
    </lineage>
</organism>
<evidence type="ECO:0000255" key="1">
    <source>
        <dbReference type="HAMAP-Rule" id="MF_00127"/>
    </source>
</evidence>
<protein>
    <recommendedName>
        <fullName evidence="1">Histidine--tRNA ligase</fullName>
        <ecNumber evidence="1">6.1.1.21</ecNumber>
    </recommendedName>
    <alternativeName>
        <fullName evidence="1">Histidyl-tRNA synthetase</fullName>
        <shortName evidence="1">HisRS</shortName>
    </alternativeName>
</protein>
<accession>Q39FR0</accession>
<comment type="catalytic activity">
    <reaction evidence="1">
        <text>tRNA(His) + L-histidine + ATP = L-histidyl-tRNA(His) + AMP + diphosphate + H(+)</text>
        <dbReference type="Rhea" id="RHEA:17313"/>
        <dbReference type="Rhea" id="RHEA-COMP:9665"/>
        <dbReference type="Rhea" id="RHEA-COMP:9689"/>
        <dbReference type="ChEBI" id="CHEBI:15378"/>
        <dbReference type="ChEBI" id="CHEBI:30616"/>
        <dbReference type="ChEBI" id="CHEBI:33019"/>
        <dbReference type="ChEBI" id="CHEBI:57595"/>
        <dbReference type="ChEBI" id="CHEBI:78442"/>
        <dbReference type="ChEBI" id="CHEBI:78527"/>
        <dbReference type="ChEBI" id="CHEBI:456215"/>
        <dbReference type="EC" id="6.1.1.21"/>
    </reaction>
</comment>
<comment type="subunit">
    <text evidence="1">Homodimer.</text>
</comment>
<comment type="subcellular location">
    <subcellularLocation>
        <location evidence="1">Cytoplasm</location>
    </subcellularLocation>
</comment>
<comment type="similarity">
    <text evidence="1">Belongs to the class-II aminoacyl-tRNA synthetase family.</text>
</comment>
<keyword id="KW-0030">Aminoacyl-tRNA synthetase</keyword>
<keyword id="KW-0067">ATP-binding</keyword>
<keyword id="KW-0963">Cytoplasm</keyword>
<keyword id="KW-0436">Ligase</keyword>
<keyword id="KW-0547">Nucleotide-binding</keyword>
<keyword id="KW-0648">Protein biosynthesis</keyword>
<gene>
    <name evidence="1" type="primary">hisS</name>
    <name type="ordered locus">Bcep18194_A5112</name>
</gene>